<reference key="1">
    <citation type="journal article" date="2010" name="Environ. Microbiol.">
        <title>The genome of Syntrophomonas wolfei: new insights into syntrophic metabolism and biohydrogen production.</title>
        <authorList>
            <person name="Sieber J.R."/>
            <person name="Sims D.R."/>
            <person name="Han C."/>
            <person name="Kim E."/>
            <person name="Lykidis A."/>
            <person name="Lapidus A.L."/>
            <person name="McDonnald E."/>
            <person name="Rohlin L."/>
            <person name="Culley D.E."/>
            <person name="Gunsalus R."/>
            <person name="McInerney M.J."/>
        </authorList>
    </citation>
    <scope>NUCLEOTIDE SEQUENCE [LARGE SCALE GENOMIC DNA]</scope>
    <source>
        <strain>DSM 2245B / Goettingen</strain>
    </source>
</reference>
<evidence type="ECO:0000255" key="1">
    <source>
        <dbReference type="HAMAP-Rule" id="MF_00366"/>
    </source>
</evidence>
<keyword id="KW-0240">DNA-directed RNA polymerase</keyword>
<keyword id="KW-0548">Nucleotidyltransferase</keyword>
<keyword id="KW-1185">Reference proteome</keyword>
<keyword id="KW-0804">Transcription</keyword>
<keyword id="KW-0808">Transferase</keyword>
<dbReference type="EC" id="2.7.7.6" evidence="1"/>
<dbReference type="EMBL" id="CP000448">
    <property type="protein sequence ID" value="ABI68545.1"/>
    <property type="molecule type" value="Genomic_DNA"/>
</dbReference>
<dbReference type="RefSeq" id="WP_011640648.1">
    <property type="nucleotide sequence ID" value="NC_008346.1"/>
</dbReference>
<dbReference type="SMR" id="Q0AXK9"/>
<dbReference type="STRING" id="335541.Swol_1236"/>
<dbReference type="KEGG" id="swo:Swol_1236"/>
<dbReference type="eggNOG" id="COG1758">
    <property type="taxonomic scope" value="Bacteria"/>
</dbReference>
<dbReference type="HOGENOM" id="CLU_125406_6_1_9"/>
<dbReference type="OrthoDB" id="2084579at2"/>
<dbReference type="Proteomes" id="UP000001968">
    <property type="component" value="Chromosome"/>
</dbReference>
<dbReference type="GO" id="GO:0000428">
    <property type="term" value="C:DNA-directed RNA polymerase complex"/>
    <property type="evidence" value="ECO:0007669"/>
    <property type="project" value="UniProtKB-KW"/>
</dbReference>
<dbReference type="GO" id="GO:0003677">
    <property type="term" value="F:DNA binding"/>
    <property type="evidence" value="ECO:0007669"/>
    <property type="project" value="UniProtKB-UniRule"/>
</dbReference>
<dbReference type="GO" id="GO:0003899">
    <property type="term" value="F:DNA-directed RNA polymerase activity"/>
    <property type="evidence" value="ECO:0007669"/>
    <property type="project" value="UniProtKB-UniRule"/>
</dbReference>
<dbReference type="GO" id="GO:0006351">
    <property type="term" value="P:DNA-templated transcription"/>
    <property type="evidence" value="ECO:0007669"/>
    <property type="project" value="UniProtKB-UniRule"/>
</dbReference>
<dbReference type="Gene3D" id="3.90.940.10">
    <property type="match status" value="1"/>
</dbReference>
<dbReference type="HAMAP" id="MF_00366">
    <property type="entry name" value="RNApol_bact_RpoZ"/>
    <property type="match status" value="1"/>
</dbReference>
<dbReference type="InterPro" id="IPR003716">
    <property type="entry name" value="DNA-dir_RNA_pol_omega"/>
</dbReference>
<dbReference type="InterPro" id="IPR006110">
    <property type="entry name" value="Pol_omega/Rpo6/RPB6"/>
</dbReference>
<dbReference type="InterPro" id="IPR036161">
    <property type="entry name" value="RPB6/omega-like_sf"/>
</dbReference>
<dbReference type="Pfam" id="PF01192">
    <property type="entry name" value="RNA_pol_Rpb6"/>
    <property type="match status" value="1"/>
</dbReference>
<dbReference type="SMART" id="SM01409">
    <property type="entry name" value="RNA_pol_Rpb6"/>
    <property type="match status" value="1"/>
</dbReference>
<dbReference type="SUPFAM" id="SSF63562">
    <property type="entry name" value="RPB6/omega subunit-like"/>
    <property type="match status" value="1"/>
</dbReference>
<sequence>MIPSSTRELLNIADSKYAVVVAVAKRARTLSEKYKEDENYRLSTMVTRALDEVVNGKVIIEPSKEDGSREV</sequence>
<feature type="chain" id="PRO_1000006033" description="DNA-directed RNA polymerase subunit omega">
    <location>
        <begin position="1"/>
        <end position="71"/>
    </location>
</feature>
<protein>
    <recommendedName>
        <fullName evidence="1">DNA-directed RNA polymerase subunit omega</fullName>
        <shortName evidence="1">RNAP omega subunit</shortName>
        <ecNumber evidence="1">2.7.7.6</ecNumber>
    </recommendedName>
    <alternativeName>
        <fullName evidence="1">RNA polymerase omega subunit</fullName>
    </alternativeName>
    <alternativeName>
        <fullName evidence="1">Transcriptase subunit omega</fullName>
    </alternativeName>
</protein>
<organism>
    <name type="scientific">Syntrophomonas wolfei subsp. wolfei (strain DSM 2245B / Goettingen)</name>
    <dbReference type="NCBI Taxonomy" id="335541"/>
    <lineage>
        <taxon>Bacteria</taxon>
        <taxon>Bacillati</taxon>
        <taxon>Bacillota</taxon>
        <taxon>Clostridia</taxon>
        <taxon>Eubacteriales</taxon>
        <taxon>Syntrophomonadaceae</taxon>
        <taxon>Syntrophomonas</taxon>
    </lineage>
</organism>
<comment type="function">
    <text evidence="1">Promotes RNA polymerase assembly. Latches the N- and C-terminal regions of the beta' subunit thereby facilitating its interaction with the beta and alpha subunits.</text>
</comment>
<comment type="catalytic activity">
    <reaction evidence="1">
        <text>RNA(n) + a ribonucleoside 5'-triphosphate = RNA(n+1) + diphosphate</text>
        <dbReference type="Rhea" id="RHEA:21248"/>
        <dbReference type="Rhea" id="RHEA-COMP:14527"/>
        <dbReference type="Rhea" id="RHEA-COMP:17342"/>
        <dbReference type="ChEBI" id="CHEBI:33019"/>
        <dbReference type="ChEBI" id="CHEBI:61557"/>
        <dbReference type="ChEBI" id="CHEBI:140395"/>
        <dbReference type="EC" id="2.7.7.6"/>
    </reaction>
</comment>
<comment type="subunit">
    <text evidence="1">The RNAP catalytic core consists of 2 alpha, 1 beta, 1 beta' and 1 omega subunit. When a sigma factor is associated with the core the holoenzyme is formed, which can initiate transcription.</text>
</comment>
<comment type="similarity">
    <text evidence="1">Belongs to the RNA polymerase subunit omega family.</text>
</comment>
<proteinExistence type="inferred from homology"/>
<name>RPOZ_SYNWW</name>
<accession>Q0AXK9</accession>
<gene>
    <name evidence="1" type="primary">rpoZ</name>
    <name type="ordered locus">Swol_1236</name>
</gene>